<reference key="1">
    <citation type="submission" date="2005-08" db="EMBL/GenBank/DDBJ databases">
        <authorList>
            <consortium name="NIH - Mammalian Gene Collection (MGC) project"/>
        </authorList>
    </citation>
    <scope>NUCLEOTIDE SEQUENCE [LARGE SCALE MRNA]</scope>
    <source>
        <strain>Hereford</strain>
        <tissue>Heart ventricle</tissue>
    </source>
</reference>
<gene>
    <name type="primary">SEM1</name>
    <name type="synonym">DSS1</name>
    <name type="synonym">SHFDG1</name>
    <name type="synonym">SHFM1</name>
</gene>
<feature type="chain" id="PRO_0000250508" description="26S proteasome complex subunit SEM1">
    <location>
        <begin position="1"/>
        <end position="70"/>
    </location>
</feature>
<organism>
    <name type="scientific">Bos taurus</name>
    <name type="common">Bovine</name>
    <dbReference type="NCBI Taxonomy" id="9913"/>
    <lineage>
        <taxon>Eukaryota</taxon>
        <taxon>Metazoa</taxon>
        <taxon>Chordata</taxon>
        <taxon>Craniata</taxon>
        <taxon>Vertebrata</taxon>
        <taxon>Euteleostomi</taxon>
        <taxon>Mammalia</taxon>
        <taxon>Eutheria</taxon>
        <taxon>Laurasiatheria</taxon>
        <taxon>Artiodactyla</taxon>
        <taxon>Ruminantia</taxon>
        <taxon>Pecora</taxon>
        <taxon>Bovidae</taxon>
        <taxon>Bovinae</taxon>
        <taxon>Bos</taxon>
    </lineage>
</organism>
<keyword id="KW-0539">Nucleus</keyword>
<keyword id="KW-0647">Proteasome</keyword>
<keyword id="KW-1185">Reference proteome</keyword>
<protein>
    <recommendedName>
        <fullName>26S proteasome complex subunit SEM1</fullName>
    </recommendedName>
    <alternativeName>
        <fullName>26S proteasome complex subunit DSS1</fullName>
    </alternativeName>
    <alternativeName>
        <fullName>Split hand/foot malformation type 1 protein homolog</fullName>
    </alternativeName>
</protein>
<name>SEM1_BOVIN</name>
<dbReference type="EMBL" id="BC103152">
    <property type="protein sequence ID" value="AAI03153.1"/>
    <property type="molecule type" value="mRNA"/>
</dbReference>
<dbReference type="RefSeq" id="NP_001106788.1">
    <property type="nucleotide sequence ID" value="NM_001113317.2"/>
</dbReference>
<dbReference type="RefSeq" id="XP_010823385.1">
    <property type="nucleotide sequence ID" value="XM_010825083.1"/>
</dbReference>
<dbReference type="SMR" id="Q3ZBR6"/>
<dbReference type="FunCoup" id="Q3ZBR6">
    <property type="interactions" value="848"/>
</dbReference>
<dbReference type="STRING" id="9913.ENSBTAP00000045834"/>
<dbReference type="PaxDb" id="9913-ENSBTAP00000045834"/>
<dbReference type="Ensembl" id="ENSBTAT00000129528.1">
    <property type="protein sequence ID" value="ENSBTAP00000099973.1"/>
    <property type="gene ID" value="ENSBTAG00000061719.1"/>
</dbReference>
<dbReference type="GeneID" id="767981"/>
<dbReference type="KEGG" id="bta:101907965"/>
<dbReference type="KEGG" id="bta:767981"/>
<dbReference type="CTD" id="7979"/>
<dbReference type="VEuPathDB" id="HostDB:ENSBTAG00000034496"/>
<dbReference type="VEuPathDB" id="HostDB:ENSBTAG00000052508"/>
<dbReference type="eggNOG" id="KOG4764">
    <property type="taxonomic scope" value="Eukaryota"/>
</dbReference>
<dbReference type="GeneTree" id="ENSGT00940000162732"/>
<dbReference type="HOGENOM" id="CLU_141774_1_2_1"/>
<dbReference type="InParanoid" id="Q3ZBR6"/>
<dbReference type="OMA" id="TLWENNW"/>
<dbReference type="TreeFam" id="TF314699"/>
<dbReference type="Proteomes" id="UP000009136">
    <property type="component" value="Chromosome 22"/>
</dbReference>
<dbReference type="Bgee" id="ENSBTAG00000034496">
    <property type="expression patterns" value="Expressed in abomasum and 98 other cell types or tissues"/>
</dbReference>
<dbReference type="GO" id="GO:0005829">
    <property type="term" value="C:cytosol"/>
    <property type="evidence" value="ECO:0000304"/>
    <property type="project" value="Reactome"/>
</dbReference>
<dbReference type="GO" id="GO:0005634">
    <property type="term" value="C:nucleus"/>
    <property type="evidence" value="ECO:0007669"/>
    <property type="project" value="UniProtKB-SubCell"/>
</dbReference>
<dbReference type="GO" id="GO:0000502">
    <property type="term" value="C:proteasome complex"/>
    <property type="evidence" value="ECO:0000250"/>
    <property type="project" value="UniProtKB"/>
</dbReference>
<dbReference type="GO" id="GO:0008541">
    <property type="term" value="C:proteasome regulatory particle, lid subcomplex"/>
    <property type="evidence" value="ECO:0007669"/>
    <property type="project" value="InterPro"/>
</dbReference>
<dbReference type="GO" id="GO:0000724">
    <property type="term" value="P:double-strand break repair via homologous recombination"/>
    <property type="evidence" value="ECO:0000318"/>
    <property type="project" value="GO_Central"/>
</dbReference>
<dbReference type="GO" id="GO:0006406">
    <property type="term" value="P:mRNA export from nucleus"/>
    <property type="evidence" value="ECO:0007669"/>
    <property type="project" value="InterPro"/>
</dbReference>
<dbReference type="GO" id="GO:0043248">
    <property type="term" value="P:proteasome assembly"/>
    <property type="evidence" value="ECO:0007669"/>
    <property type="project" value="InterPro"/>
</dbReference>
<dbReference type="CDD" id="cd13768">
    <property type="entry name" value="DSS1_Sem1"/>
    <property type="match status" value="1"/>
</dbReference>
<dbReference type="InterPro" id="IPR007834">
    <property type="entry name" value="DSS1_SEM1"/>
</dbReference>
<dbReference type="PANTHER" id="PTHR16771">
    <property type="entry name" value="26 PROTEASOME COMPLEX SUBUNIT DSS1"/>
    <property type="match status" value="1"/>
</dbReference>
<dbReference type="PANTHER" id="PTHR16771:SF0">
    <property type="entry name" value="26S PROTEASOME COMPLEX SUBUNIT SEM1"/>
    <property type="match status" value="1"/>
</dbReference>
<dbReference type="Pfam" id="PF05160">
    <property type="entry name" value="DSS1_SEM1"/>
    <property type="match status" value="1"/>
</dbReference>
<dbReference type="SMART" id="SM01385">
    <property type="entry name" value="DSS1_SEM1"/>
    <property type="match status" value="1"/>
</dbReference>
<proteinExistence type="inferred from homology"/>
<comment type="function">
    <text evidence="1">Component of the 26S proteasome, a multiprotein complex involved in the ATP-dependent degradation of ubiquitinated proteins. This complex plays a key role in the maintenance of protein homeostasis by removing misfolded or damaged proteins, which could impair cellular functions, and by removing proteins whose functions are no longer required. Therefore, the proteasome participates in numerous cellular processes, including cell cycle progression, apoptosis, or DNA damage repair. Component of the TREX-2 complex (transcription and export complex 2), composed of at least ENY2, GANP, PCID2, SEM1, and either centrin CETN2 or CETN3. The TREX-2 complex functions in docking export-competent ribonucleoprotein particles (mRNPs) to the nuclear entrance of the nuclear pore complex (nuclear basket). TREX-2 participates in mRNA export and accurate chromatin positioning in the nucleus by tethering genes to the nuclear periphery. Binds and stabilizes BRCA2 and is thus involved in the control of R-loop-associated DNA damage and thus transcription-associated genomic instability. R-loop accumulation increases in SEM1-depleted cells.</text>
</comment>
<comment type="subunit">
    <text evidence="1">Component of the 19S proteasome regulatory particle complex. The 26S proteasome consists of a 20S core particle (CP) and two 19S regulatory subunits (RP). The regulatory particle is made of a lid composed of 9 subunits including SEM1, a base containing 6 ATPases and few additional components. Belongs to the TREX-2 complex (transcription and export complex 2), composed of at least ENY2, GANP, PCID2, SEM1, and either centrin CETN2 or CETN3. Component of the homologous recombination repair (HR) complex composed of ERCC5/XPG, BRCA2, PALB2, DSS1 and RAD51 (By similarity). Interacts with the C-terminal of BRCA2.</text>
</comment>
<comment type="subcellular location">
    <subcellularLocation>
        <location evidence="1">Nucleus</location>
    </subcellularLocation>
</comment>
<comment type="similarity">
    <text evidence="2">Belongs to the DSS1/SEM1 family.</text>
</comment>
<sequence>MSEKKQPVDLGLLEEDDEFEEFPAEDWAGLDEDEDAHVWEDNWDDDNVEDDFSNQLRAELEKHGYKMETS</sequence>
<accession>Q3ZBR6</accession>
<evidence type="ECO:0000250" key="1">
    <source>
        <dbReference type="UniProtKB" id="P60896"/>
    </source>
</evidence>
<evidence type="ECO:0000305" key="2"/>